<proteinExistence type="inferred from homology"/>
<protein>
    <recommendedName>
        <fullName evidence="1">Large ribosomal subunit protein uL10</fullName>
    </recommendedName>
    <alternativeName>
        <fullName evidence="2">50S ribosomal protein L10</fullName>
    </alternativeName>
</protein>
<accession>C3PMH5</accession>
<gene>
    <name evidence="1" type="primary">rplJ</name>
    <name type="ordered locus">RAF_ORF0168</name>
</gene>
<sequence>MLRSEKPVAVEDIVNIYKESPSIIITHYHGLTVSQVSSLRESLKSKEAGFKVVKNTLAKIAANQTGLNSIVNLFAGPTAIVYSKEPVEMAKLVVNFAKANDNLKIIGGIVDNHVLDEHSIKELSKLPTLNELRGKIVGLLQAPATKVVGVLQAPSSSMARVIQAHASKN</sequence>
<reference key="1">
    <citation type="journal article" date="2009" name="BMC Genomics">
        <title>Analysis of the Rickettsia africae genome reveals that virulence acquisition in Rickettsia species may be explained by genome reduction.</title>
        <authorList>
            <person name="Fournier P.-E."/>
            <person name="El Karkouri K."/>
            <person name="Leroy Q."/>
            <person name="Robert C."/>
            <person name="Giumelli B."/>
            <person name="Renesto P."/>
            <person name="Socolovschi C."/>
            <person name="Parola P."/>
            <person name="Audic S."/>
            <person name="Raoult D."/>
        </authorList>
    </citation>
    <scope>NUCLEOTIDE SEQUENCE [LARGE SCALE GENOMIC DNA]</scope>
    <source>
        <strain>ESF-5</strain>
    </source>
</reference>
<feature type="chain" id="PRO_1000205451" description="Large ribosomal subunit protein uL10">
    <location>
        <begin position="1"/>
        <end position="169"/>
    </location>
</feature>
<organism>
    <name type="scientific">Rickettsia africae (strain ESF-5)</name>
    <dbReference type="NCBI Taxonomy" id="347255"/>
    <lineage>
        <taxon>Bacteria</taxon>
        <taxon>Pseudomonadati</taxon>
        <taxon>Pseudomonadota</taxon>
        <taxon>Alphaproteobacteria</taxon>
        <taxon>Rickettsiales</taxon>
        <taxon>Rickettsiaceae</taxon>
        <taxon>Rickettsieae</taxon>
        <taxon>Rickettsia</taxon>
        <taxon>spotted fever group</taxon>
    </lineage>
</organism>
<keyword id="KW-0687">Ribonucleoprotein</keyword>
<keyword id="KW-0689">Ribosomal protein</keyword>
<keyword id="KW-0694">RNA-binding</keyword>
<keyword id="KW-0699">rRNA-binding</keyword>
<comment type="function">
    <text evidence="1">Forms part of the ribosomal stalk, playing a central role in the interaction of the ribosome with GTP-bound translation factors.</text>
</comment>
<comment type="subunit">
    <text evidence="1">Part of the ribosomal stalk of the 50S ribosomal subunit. The N-terminus interacts with L11 and the large rRNA to form the base of the stalk. The C-terminus forms an elongated spine to which L12 dimers bind in a sequential fashion forming a multimeric L10(L12)X complex.</text>
</comment>
<comment type="similarity">
    <text evidence="1">Belongs to the universal ribosomal protein uL10 family.</text>
</comment>
<evidence type="ECO:0000255" key="1">
    <source>
        <dbReference type="HAMAP-Rule" id="MF_00362"/>
    </source>
</evidence>
<evidence type="ECO:0000305" key="2"/>
<name>RL10_RICAE</name>
<dbReference type="EMBL" id="CP001612">
    <property type="protein sequence ID" value="ACP53135.1"/>
    <property type="molecule type" value="Genomic_DNA"/>
</dbReference>
<dbReference type="RefSeq" id="WP_004996634.1">
    <property type="nucleotide sequence ID" value="NC_012633.1"/>
</dbReference>
<dbReference type="SMR" id="C3PMH5"/>
<dbReference type="GeneID" id="95361894"/>
<dbReference type="KEGG" id="raf:RAF_ORF0168"/>
<dbReference type="HOGENOM" id="CLU_092227_0_0_5"/>
<dbReference type="Proteomes" id="UP000002305">
    <property type="component" value="Chromosome"/>
</dbReference>
<dbReference type="GO" id="GO:0015934">
    <property type="term" value="C:large ribosomal subunit"/>
    <property type="evidence" value="ECO:0007669"/>
    <property type="project" value="InterPro"/>
</dbReference>
<dbReference type="GO" id="GO:0070180">
    <property type="term" value="F:large ribosomal subunit rRNA binding"/>
    <property type="evidence" value="ECO:0007669"/>
    <property type="project" value="UniProtKB-UniRule"/>
</dbReference>
<dbReference type="GO" id="GO:0003735">
    <property type="term" value="F:structural constituent of ribosome"/>
    <property type="evidence" value="ECO:0007669"/>
    <property type="project" value="InterPro"/>
</dbReference>
<dbReference type="GO" id="GO:0006412">
    <property type="term" value="P:translation"/>
    <property type="evidence" value="ECO:0007669"/>
    <property type="project" value="UniProtKB-UniRule"/>
</dbReference>
<dbReference type="CDD" id="cd05797">
    <property type="entry name" value="Ribosomal_L10"/>
    <property type="match status" value="1"/>
</dbReference>
<dbReference type="Gene3D" id="3.30.70.1730">
    <property type="match status" value="1"/>
</dbReference>
<dbReference type="Gene3D" id="6.10.250.290">
    <property type="match status" value="1"/>
</dbReference>
<dbReference type="HAMAP" id="MF_00362">
    <property type="entry name" value="Ribosomal_uL10"/>
    <property type="match status" value="1"/>
</dbReference>
<dbReference type="InterPro" id="IPR001790">
    <property type="entry name" value="Ribosomal_uL10"/>
</dbReference>
<dbReference type="InterPro" id="IPR043141">
    <property type="entry name" value="Ribosomal_uL10-like_sf"/>
</dbReference>
<dbReference type="InterPro" id="IPR022973">
    <property type="entry name" value="Ribosomal_uL10_bac"/>
</dbReference>
<dbReference type="InterPro" id="IPR047865">
    <property type="entry name" value="Ribosomal_uL10_bac_type"/>
</dbReference>
<dbReference type="InterPro" id="IPR002363">
    <property type="entry name" value="Ribosomal_uL10_CS_bac"/>
</dbReference>
<dbReference type="NCBIfam" id="NF000955">
    <property type="entry name" value="PRK00099.1-1"/>
    <property type="match status" value="1"/>
</dbReference>
<dbReference type="PANTHER" id="PTHR11560">
    <property type="entry name" value="39S RIBOSOMAL PROTEIN L10, MITOCHONDRIAL"/>
    <property type="match status" value="1"/>
</dbReference>
<dbReference type="Pfam" id="PF00466">
    <property type="entry name" value="Ribosomal_L10"/>
    <property type="match status" value="1"/>
</dbReference>
<dbReference type="SUPFAM" id="SSF160369">
    <property type="entry name" value="Ribosomal protein L10-like"/>
    <property type="match status" value="1"/>
</dbReference>
<dbReference type="PROSITE" id="PS01109">
    <property type="entry name" value="RIBOSOMAL_L10"/>
    <property type="match status" value="1"/>
</dbReference>